<dbReference type="EMBL" id="AAFI02000040">
    <property type="protein sequence ID" value="EAL66808.1"/>
    <property type="molecule type" value="Genomic_DNA"/>
</dbReference>
<dbReference type="RefSeq" id="XP_640772.1">
    <property type="nucleotide sequence ID" value="XM_635680.1"/>
</dbReference>
<dbReference type="PaxDb" id="44689-DDB0203959"/>
<dbReference type="EnsemblProtists" id="EAL66808">
    <property type="protein sequence ID" value="EAL66808"/>
    <property type="gene ID" value="DDB_G0281023"/>
</dbReference>
<dbReference type="GeneID" id="8622825"/>
<dbReference type="KEGG" id="ddi:DDB_G0281023"/>
<dbReference type="VEuPathDB" id="AmoebaDB:DDB_G0281023"/>
<dbReference type="HOGENOM" id="CLU_3208731_0_0_1"/>
<dbReference type="InParanoid" id="Q54UK4"/>
<dbReference type="Proteomes" id="UP000002195">
    <property type="component" value="Chromosome 3"/>
</dbReference>
<dbReference type="GO" id="GO:0016020">
    <property type="term" value="C:membrane"/>
    <property type="evidence" value="ECO:0007669"/>
    <property type="project" value="UniProtKB-SubCell"/>
</dbReference>
<comment type="subcellular location">
    <subcellularLocation>
        <location evidence="2">Membrane</location>
        <topology evidence="2">Single-pass membrane protein</topology>
    </subcellularLocation>
</comment>
<comment type="caution">
    <text evidence="2">Product of a dubious gene prediction.</text>
</comment>
<accession>Q54UK4</accession>
<reference key="1">
    <citation type="journal article" date="2005" name="Nature">
        <title>The genome of the social amoeba Dictyostelium discoideum.</title>
        <authorList>
            <person name="Eichinger L."/>
            <person name="Pachebat J.A."/>
            <person name="Gloeckner G."/>
            <person name="Rajandream M.A."/>
            <person name="Sucgang R."/>
            <person name="Berriman M."/>
            <person name="Song J."/>
            <person name="Olsen R."/>
            <person name="Szafranski K."/>
            <person name="Xu Q."/>
            <person name="Tunggal B."/>
            <person name="Kummerfeld S."/>
            <person name="Madera M."/>
            <person name="Konfortov B.A."/>
            <person name="Rivero F."/>
            <person name="Bankier A.T."/>
            <person name="Lehmann R."/>
            <person name="Hamlin N."/>
            <person name="Davies R."/>
            <person name="Gaudet P."/>
            <person name="Fey P."/>
            <person name="Pilcher K."/>
            <person name="Chen G."/>
            <person name="Saunders D."/>
            <person name="Sodergren E.J."/>
            <person name="Davis P."/>
            <person name="Kerhornou A."/>
            <person name="Nie X."/>
            <person name="Hall N."/>
            <person name="Anjard C."/>
            <person name="Hemphill L."/>
            <person name="Bason N."/>
            <person name="Farbrother P."/>
            <person name="Desany B."/>
            <person name="Just E."/>
            <person name="Morio T."/>
            <person name="Rost R."/>
            <person name="Churcher C.M."/>
            <person name="Cooper J."/>
            <person name="Haydock S."/>
            <person name="van Driessche N."/>
            <person name="Cronin A."/>
            <person name="Goodhead I."/>
            <person name="Muzny D.M."/>
            <person name="Mourier T."/>
            <person name="Pain A."/>
            <person name="Lu M."/>
            <person name="Harper D."/>
            <person name="Lindsay R."/>
            <person name="Hauser H."/>
            <person name="James K.D."/>
            <person name="Quiles M."/>
            <person name="Madan Babu M."/>
            <person name="Saito T."/>
            <person name="Buchrieser C."/>
            <person name="Wardroper A."/>
            <person name="Felder M."/>
            <person name="Thangavelu M."/>
            <person name="Johnson D."/>
            <person name="Knights A."/>
            <person name="Loulseged H."/>
            <person name="Mungall K.L."/>
            <person name="Oliver K."/>
            <person name="Price C."/>
            <person name="Quail M.A."/>
            <person name="Urushihara H."/>
            <person name="Hernandez J."/>
            <person name="Rabbinowitsch E."/>
            <person name="Steffen D."/>
            <person name="Sanders M."/>
            <person name="Ma J."/>
            <person name="Kohara Y."/>
            <person name="Sharp S."/>
            <person name="Simmonds M.N."/>
            <person name="Spiegler S."/>
            <person name="Tivey A."/>
            <person name="Sugano S."/>
            <person name="White B."/>
            <person name="Walker D."/>
            <person name="Woodward J.R."/>
            <person name="Winckler T."/>
            <person name="Tanaka Y."/>
            <person name="Shaulsky G."/>
            <person name="Schleicher M."/>
            <person name="Weinstock G.M."/>
            <person name="Rosenthal A."/>
            <person name="Cox E.C."/>
            <person name="Chisholm R.L."/>
            <person name="Gibbs R.A."/>
            <person name="Loomis W.F."/>
            <person name="Platzer M."/>
            <person name="Kay R.R."/>
            <person name="Williams J.G."/>
            <person name="Dear P.H."/>
            <person name="Noegel A.A."/>
            <person name="Barrell B.G."/>
            <person name="Kuspa A."/>
        </authorList>
    </citation>
    <scope>NUCLEOTIDE SEQUENCE [LARGE SCALE GENOMIC DNA]</scope>
    <source>
        <strain>AX4</strain>
    </source>
</reference>
<proteinExistence type="uncertain"/>
<evidence type="ECO:0000255" key="1"/>
<evidence type="ECO:0000305" key="2"/>
<sequence length="45" mass="5518">MFKPDFKSRLLYFVLFVDIYGIFTNNIDKIVYKKVDCFKINIFIF</sequence>
<organism>
    <name type="scientific">Dictyostelium discoideum</name>
    <name type="common">Social amoeba</name>
    <dbReference type="NCBI Taxonomy" id="44689"/>
    <lineage>
        <taxon>Eukaryota</taxon>
        <taxon>Amoebozoa</taxon>
        <taxon>Evosea</taxon>
        <taxon>Eumycetozoa</taxon>
        <taxon>Dictyostelia</taxon>
        <taxon>Dictyosteliales</taxon>
        <taxon>Dictyosteliaceae</taxon>
        <taxon>Dictyostelium</taxon>
    </lineage>
</organism>
<feature type="chain" id="PRO_0000352396" description="Putative uncharacterized transmembrane protein DDB_G0281023">
    <location>
        <begin position="1"/>
        <end position="45"/>
    </location>
</feature>
<feature type="transmembrane region" description="Helical" evidence="1">
    <location>
        <begin position="10"/>
        <end position="27"/>
    </location>
</feature>
<name>Y3959_DICDI</name>
<keyword id="KW-0472">Membrane</keyword>
<keyword id="KW-1185">Reference proteome</keyword>
<keyword id="KW-0812">Transmembrane</keyword>
<keyword id="KW-1133">Transmembrane helix</keyword>
<protein>
    <recommendedName>
        <fullName>Putative uncharacterized transmembrane protein DDB_G0281023</fullName>
    </recommendedName>
</protein>
<gene>
    <name type="ORF">DDB_G0281023</name>
</gene>